<name>NIRK_RHIME</name>
<evidence type="ECO:0000250" key="1"/>
<evidence type="ECO:0000255" key="2">
    <source>
        <dbReference type="PROSITE-ProRule" id="PRU00648"/>
    </source>
</evidence>
<evidence type="ECO:0000305" key="3"/>
<evidence type="ECO:0007829" key="4">
    <source>
        <dbReference type="PDB" id="7P2F"/>
    </source>
</evidence>
<proteinExistence type="evidence at protein level"/>
<organism>
    <name type="scientific">Rhizobium meliloti (strain 1021)</name>
    <name type="common">Ensifer meliloti</name>
    <name type="synonym">Sinorhizobium meliloti</name>
    <dbReference type="NCBI Taxonomy" id="266834"/>
    <lineage>
        <taxon>Bacteria</taxon>
        <taxon>Pseudomonadati</taxon>
        <taxon>Pseudomonadota</taxon>
        <taxon>Alphaproteobacteria</taxon>
        <taxon>Hyphomicrobiales</taxon>
        <taxon>Rhizobiaceae</taxon>
        <taxon>Sinorhizobium/Ensifer group</taxon>
        <taxon>Sinorhizobium</taxon>
    </lineage>
</organism>
<keyword id="KW-0002">3D-structure</keyword>
<keyword id="KW-0186">Copper</keyword>
<keyword id="KW-0274">FAD</keyword>
<keyword id="KW-0285">Flavoprotein</keyword>
<keyword id="KW-0479">Metal-binding</keyword>
<keyword id="KW-0534">Nitrate assimilation</keyword>
<keyword id="KW-0560">Oxidoreductase</keyword>
<keyword id="KW-0574">Periplasm</keyword>
<keyword id="KW-0614">Plasmid</keyword>
<keyword id="KW-1185">Reference proteome</keyword>
<keyword id="KW-0677">Repeat</keyword>
<keyword id="KW-0732">Signal</keyword>
<gene>
    <name type="primary">nirK</name>
    <name type="ordered locus">RA0681</name>
    <name type="ORF">SMa1250</name>
</gene>
<dbReference type="EC" id="1.7.2.1"/>
<dbReference type="EMBL" id="AE006469">
    <property type="protein sequence ID" value="AAK65339.1"/>
    <property type="molecule type" value="Genomic_DNA"/>
</dbReference>
<dbReference type="PIR" id="A95347">
    <property type="entry name" value="A95347"/>
</dbReference>
<dbReference type="RefSeq" id="NP_435927.1">
    <property type="nucleotide sequence ID" value="NC_003037.1"/>
</dbReference>
<dbReference type="RefSeq" id="WP_010967660.1">
    <property type="nucleotide sequence ID" value="NC_003037.1"/>
</dbReference>
<dbReference type="PDB" id="7P2F">
    <property type="method" value="X-ray"/>
    <property type="resolution" value="2.50 A"/>
    <property type="chains" value="A/B/C=1-376"/>
</dbReference>
<dbReference type="PDBsum" id="7P2F"/>
<dbReference type="SMR" id="Q92Z29"/>
<dbReference type="EnsemblBacteria" id="AAK65339">
    <property type="protein sequence ID" value="AAK65339"/>
    <property type="gene ID" value="SMa1250"/>
</dbReference>
<dbReference type="GeneID" id="89572471"/>
<dbReference type="KEGG" id="sme:SMa1250"/>
<dbReference type="PATRIC" id="fig|266834.11.peg.701"/>
<dbReference type="HOGENOM" id="CLU_031740_1_0_5"/>
<dbReference type="OrthoDB" id="9757546at2"/>
<dbReference type="UniPathway" id="UPA00652">
    <property type="reaction ID" value="UER00707"/>
</dbReference>
<dbReference type="PRO" id="PR:Q92Z29"/>
<dbReference type="Proteomes" id="UP000001976">
    <property type="component" value="Plasmid pSymA"/>
</dbReference>
<dbReference type="GO" id="GO:0042597">
    <property type="term" value="C:periplasmic space"/>
    <property type="evidence" value="ECO:0007669"/>
    <property type="project" value="UniProtKB-SubCell"/>
</dbReference>
<dbReference type="GO" id="GO:0005507">
    <property type="term" value="F:copper ion binding"/>
    <property type="evidence" value="ECO:0007669"/>
    <property type="project" value="InterPro"/>
</dbReference>
<dbReference type="GO" id="GO:0050421">
    <property type="term" value="F:nitrite reductase (NO-forming) activity"/>
    <property type="evidence" value="ECO:0007669"/>
    <property type="project" value="UniProtKB-EC"/>
</dbReference>
<dbReference type="GO" id="GO:0019333">
    <property type="term" value="P:denitrification pathway"/>
    <property type="evidence" value="ECO:0007669"/>
    <property type="project" value="UniProtKB-UniPathway"/>
</dbReference>
<dbReference type="GO" id="GO:0042128">
    <property type="term" value="P:nitrate assimilation"/>
    <property type="evidence" value="ECO:0007669"/>
    <property type="project" value="UniProtKB-KW"/>
</dbReference>
<dbReference type="CDD" id="cd11020">
    <property type="entry name" value="CuRO_1_CuNIR"/>
    <property type="match status" value="1"/>
</dbReference>
<dbReference type="Gene3D" id="2.60.40.420">
    <property type="entry name" value="Cupredoxins - blue copper proteins"/>
    <property type="match status" value="2"/>
</dbReference>
<dbReference type="InterPro" id="IPR011707">
    <property type="entry name" value="Cu-oxidase-like_N"/>
</dbReference>
<dbReference type="InterPro" id="IPR001117">
    <property type="entry name" value="Cu-oxidase_2nd"/>
</dbReference>
<dbReference type="InterPro" id="IPR008972">
    <property type="entry name" value="Cupredoxin"/>
</dbReference>
<dbReference type="InterPro" id="IPR001287">
    <property type="entry name" value="NO2-reductase_Cu"/>
</dbReference>
<dbReference type="InterPro" id="IPR006311">
    <property type="entry name" value="TAT_signal"/>
</dbReference>
<dbReference type="NCBIfam" id="TIGR02376">
    <property type="entry name" value="Cu_nitrite_red"/>
    <property type="match status" value="1"/>
</dbReference>
<dbReference type="Pfam" id="PF00394">
    <property type="entry name" value="Cu-oxidase"/>
    <property type="match status" value="1"/>
</dbReference>
<dbReference type="Pfam" id="PF07732">
    <property type="entry name" value="Cu-oxidase_3"/>
    <property type="match status" value="1"/>
</dbReference>
<dbReference type="PRINTS" id="PR00695">
    <property type="entry name" value="CUNO2RDTASE"/>
</dbReference>
<dbReference type="SUPFAM" id="SSF49503">
    <property type="entry name" value="Cupredoxins"/>
    <property type="match status" value="2"/>
</dbReference>
<dbReference type="PROSITE" id="PS51318">
    <property type="entry name" value="TAT"/>
    <property type="match status" value="1"/>
</dbReference>
<geneLocation type="plasmid">
    <name>pSymA</name>
    <name>megaplasmid 1</name>
</geneLocation>
<reference key="1">
    <citation type="journal article" date="2001" name="Proc. Natl. Acad. Sci. U.S.A.">
        <title>Nucleotide sequence and predicted functions of the entire Sinorhizobium meliloti pSymA megaplasmid.</title>
        <authorList>
            <person name="Barnett M.J."/>
            <person name="Fisher R.F."/>
            <person name="Jones T."/>
            <person name="Komp C."/>
            <person name="Abola A.P."/>
            <person name="Barloy-Hubler F."/>
            <person name="Bowser L."/>
            <person name="Capela D."/>
            <person name="Galibert F."/>
            <person name="Gouzy J."/>
            <person name="Gurjal M."/>
            <person name="Hong A."/>
            <person name="Huizar L."/>
            <person name="Hyman R.W."/>
            <person name="Kahn D."/>
            <person name="Kahn M.L."/>
            <person name="Kalman S."/>
            <person name="Keating D.H."/>
            <person name="Palm C."/>
            <person name="Peck M.C."/>
            <person name="Surzycki R."/>
            <person name="Wells D.H."/>
            <person name="Yeh K.-C."/>
            <person name="Davis R.W."/>
            <person name="Federspiel N.A."/>
            <person name="Long S.R."/>
        </authorList>
    </citation>
    <scope>NUCLEOTIDE SEQUENCE [LARGE SCALE GENOMIC DNA]</scope>
    <source>
        <strain>1021</strain>
    </source>
</reference>
<reference key="2">
    <citation type="journal article" date="2001" name="Science">
        <title>The composite genome of the legume symbiont Sinorhizobium meliloti.</title>
        <authorList>
            <person name="Galibert F."/>
            <person name="Finan T.M."/>
            <person name="Long S.R."/>
            <person name="Puehler A."/>
            <person name="Abola P."/>
            <person name="Ampe F."/>
            <person name="Barloy-Hubler F."/>
            <person name="Barnett M.J."/>
            <person name="Becker A."/>
            <person name="Boistard P."/>
            <person name="Bothe G."/>
            <person name="Boutry M."/>
            <person name="Bowser L."/>
            <person name="Buhrmester J."/>
            <person name="Cadieu E."/>
            <person name="Capela D."/>
            <person name="Chain P."/>
            <person name="Cowie A."/>
            <person name="Davis R.W."/>
            <person name="Dreano S."/>
            <person name="Federspiel N.A."/>
            <person name="Fisher R.F."/>
            <person name="Gloux S."/>
            <person name="Godrie T."/>
            <person name="Goffeau A."/>
            <person name="Golding B."/>
            <person name="Gouzy J."/>
            <person name="Gurjal M."/>
            <person name="Hernandez-Lucas I."/>
            <person name="Hong A."/>
            <person name="Huizar L."/>
            <person name="Hyman R.W."/>
            <person name="Jones T."/>
            <person name="Kahn D."/>
            <person name="Kahn M.L."/>
            <person name="Kalman S."/>
            <person name="Keating D.H."/>
            <person name="Kiss E."/>
            <person name="Komp C."/>
            <person name="Lelaure V."/>
            <person name="Masuy D."/>
            <person name="Palm C."/>
            <person name="Peck M.C."/>
            <person name="Pohl T.M."/>
            <person name="Portetelle D."/>
            <person name="Purnelle B."/>
            <person name="Ramsperger U."/>
            <person name="Surzycki R."/>
            <person name="Thebault P."/>
            <person name="Vandenbol M."/>
            <person name="Vorhoelter F.J."/>
            <person name="Weidner S."/>
            <person name="Wells D.H."/>
            <person name="Wong K."/>
            <person name="Yeh K.-C."/>
            <person name="Batut J."/>
        </authorList>
    </citation>
    <scope>NUCLEOTIDE SEQUENCE [LARGE SCALE GENOMIC DNA]</scope>
    <source>
        <strain>1021</strain>
    </source>
</reference>
<sequence length="376" mass="40259">MSEQFQMTRRSMLAGAAIAGAVTPLIGAVSAHAEEAVAKTAHINVASLPRVKVDLVKPPFVHAHTQKAEGGPKVVEFTLTIEEKKIVIDEQGTELHAMTFNGSVPGPLMVVHQDDYVELTLINPDTNTLQHNIDFHSATGALGGGALTVVNPGDTTVLRFKASKAGVFVYHCAPPGMVPWHVTSGMNGAIMVLPREGLTDGKGNSITYDKVYYVGEQDFYVPRDANGKFKKYESVGEAYADTLEVMRTLTPSHIVFNGAVGALTGDSALKAAVGEKVLIVHSQANRDTRPHLIGGHGDYVWATGKFRNAPDVDQETWFIPGGTAGAAFYTFEQPGIYAYVNHNLIEAFELGAAAHFAVTGDWNDDLMTSVRAPSGT</sequence>
<comment type="catalytic activity">
    <reaction>
        <text>nitric oxide + Fe(III)-[cytochrome c] + H2O = Fe(II)-[cytochrome c] + nitrite + 2 H(+)</text>
        <dbReference type="Rhea" id="RHEA:15233"/>
        <dbReference type="Rhea" id="RHEA-COMP:10350"/>
        <dbReference type="Rhea" id="RHEA-COMP:14399"/>
        <dbReference type="ChEBI" id="CHEBI:15377"/>
        <dbReference type="ChEBI" id="CHEBI:15378"/>
        <dbReference type="ChEBI" id="CHEBI:16301"/>
        <dbReference type="ChEBI" id="CHEBI:16480"/>
        <dbReference type="ChEBI" id="CHEBI:29033"/>
        <dbReference type="ChEBI" id="CHEBI:29034"/>
        <dbReference type="EC" id="1.7.2.1"/>
    </reaction>
</comment>
<comment type="cofactor">
    <cofactor evidence="1">
        <name>Cu(2+)</name>
        <dbReference type="ChEBI" id="CHEBI:29036"/>
    </cofactor>
    <text evidence="1">Binds 1 Cu(2+) ion. The Cu(2+) ion is held by residues from each of 2 monomers of the trimer. Nitrite is bound to the Cu(2+) ion site. Pseudoazurin is the physiological electron donor for the Cu-NIR in vitro.</text>
</comment>
<comment type="cofactor">
    <cofactor evidence="1">
        <name>Cu(+)</name>
        <dbReference type="ChEBI" id="CHEBI:49552"/>
    </cofactor>
    <text evidence="1">Binds 1 Cu(+) ion. The Cu(+) ion is bound within a single monomer.</text>
</comment>
<comment type="cofactor">
    <cofactor evidence="1">
        <name>FAD</name>
        <dbReference type="ChEBI" id="CHEBI:57692"/>
    </cofactor>
</comment>
<comment type="pathway">
    <text>Nitrogen metabolism; nitrate reduction (denitrification); dinitrogen from nitrate: step 2/4.</text>
</comment>
<comment type="subunit">
    <text evidence="1">Homotrimer.</text>
</comment>
<comment type="subcellular location">
    <subcellularLocation>
        <location evidence="1">Periplasm</location>
    </subcellularLocation>
</comment>
<comment type="domain">
    <text>The type I copper site in NIR plays a crucial role for electron transfer from pseudoazurin to the type II copper site of NIR, which comprises the catalytic center of NIR for the reduction of nitrite.</text>
</comment>
<comment type="PTM">
    <text>Predicted to be exported by the Tat system. The position of the signal peptide cleavage has not been experimentally proven.</text>
</comment>
<comment type="similarity">
    <text evidence="3">Belongs to the multicopper oxidase family.</text>
</comment>
<accession>Q92Z29</accession>
<protein>
    <recommendedName>
        <fullName>Copper-containing nitrite reductase</fullName>
        <ecNumber>1.7.2.1</ecNumber>
    </recommendedName>
    <alternativeName>
        <fullName>Cu-NIR</fullName>
    </alternativeName>
</protein>
<feature type="signal peptide" description="Tat-type signal" evidence="2">
    <location>
        <begin position="1"/>
        <end position="33"/>
    </location>
</feature>
<feature type="chain" id="PRO_0000002991" description="Copper-containing nitrite reductase">
    <location>
        <begin position="34"/>
        <end position="376"/>
    </location>
</feature>
<feature type="domain" description="Plastocyanin-like 1">
    <location>
        <begin position="98"/>
        <end position="193"/>
    </location>
</feature>
<feature type="domain" description="Plastocyanin-like 2">
    <location>
        <begin position="258"/>
        <end position="359"/>
    </location>
</feature>
<feature type="binding site" description="type 1 copper site" evidence="1">
    <location>
        <position position="131"/>
    </location>
    <ligand>
        <name>Cu cation</name>
        <dbReference type="ChEBI" id="CHEBI:23378"/>
        <label>1</label>
    </ligand>
</feature>
<feature type="binding site" description="type 2 copper site" evidence="1">
    <location>
        <position position="136"/>
    </location>
    <ligand>
        <name>Cu cation</name>
        <dbReference type="ChEBI" id="CHEBI:23378"/>
        <label>2</label>
    </ligand>
</feature>
<feature type="binding site" description="type 2 copper site" evidence="1">
    <location>
        <position position="171"/>
    </location>
    <ligand>
        <name>Cu cation</name>
        <dbReference type="ChEBI" id="CHEBI:23378"/>
        <label>2</label>
    </ligand>
</feature>
<feature type="binding site" description="type 1 copper site" evidence="1">
    <location>
        <position position="172"/>
    </location>
    <ligand>
        <name>Cu cation</name>
        <dbReference type="ChEBI" id="CHEBI:23378"/>
        <label>1</label>
    </ligand>
</feature>
<feature type="binding site" description="type 1 copper site" evidence="1">
    <location>
        <position position="181"/>
    </location>
    <ligand>
        <name>Cu cation</name>
        <dbReference type="ChEBI" id="CHEBI:23378"/>
        <label>1</label>
    </ligand>
</feature>
<feature type="binding site" description="type 1 copper site" evidence="1">
    <location>
        <position position="186"/>
    </location>
    <ligand>
        <name>Cu cation</name>
        <dbReference type="ChEBI" id="CHEBI:23378"/>
        <label>1</label>
    </ligand>
</feature>
<feature type="binding site" description="type 2 copper site" evidence="1">
    <location>
        <position position="342"/>
    </location>
    <ligand>
        <name>Cu cation</name>
        <dbReference type="ChEBI" id="CHEBI:23378"/>
        <label>2</label>
    </ligand>
</feature>
<feature type="strand" evidence="4">
    <location>
        <begin position="50"/>
        <end position="52"/>
    </location>
</feature>
<feature type="strand" evidence="4">
    <location>
        <begin position="69"/>
        <end position="71"/>
    </location>
</feature>
<feature type="strand" evidence="4">
    <location>
        <begin position="74"/>
        <end position="87"/>
    </location>
</feature>
<feature type="strand" evidence="4">
    <location>
        <begin position="94"/>
        <end position="100"/>
    </location>
</feature>
<feature type="strand" evidence="4">
    <location>
        <begin position="103"/>
        <end position="105"/>
    </location>
</feature>
<feature type="strand" evidence="4">
    <location>
        <begin position="109"/>
        <end position="112"/>
    </location>
</feature>
<feature type="strand" evidence="4">
    <location>
        <begin position="116"/>
        <end position="122"/>
    </location>
</feature>
<feature type="helix" evidence="4">
    <location>
        <begin position="141"/>
        <end position="147"/>
    </location>
</feature>
<feature type="strand" evidence="4">
    <location>
        <begin position="155"/>
        <end position="161"/>
    </location>
</feature>
<feature type="strand" evidence="4">
    <location>
        <begin position="166"/>
        <end position="171"/>
    </location>
</feature>
<feature type="helix" evidence="4">
    <location>
        <begin position="178"/>
        <end position="182"/>
    </location>
</feature>
<feature type="turn" evidence="4">
    <location>
        <begin position="183"/>
        <end position="185"/>
    </location>
</feature>
<feature type="strand" evidence="4">
    <location>
        <begin position="187"/>
        <end position="193"/>
    </location>
</feature>
<feature type="strand" evidence="4">
    <location>
        <begin position="201"/>
        <end position="203"/>
    </location>
</feature>
<feature type="strand" evidence="4">
    <location>
        <begin position="209"/>
        <end position="219"/>
    </location>
</feature>
<feature type="helix" evidence="4">
    <location>
        <begin position="235"/>
        <end position="238"/>
    </location>
</feature>
<feature type="helix" evidence="4">
    <location>
        <begin position="239"/>
        <end position="246"/>
    </location>
</feature>
<feature type="turn" evidence="4">
    <location>
        <begin position="247"/>
        <end position="249"/>
    </location>
</feature>
<feature type="strand" evidence="4">
    <location>
        <begin position="252"/>
        <end position="256"/>
    </location>
</feature>
<feature type="turn" evidence="4">
    <location>
        <begin position="260"/>
        <end position="263"/>
    </location>
</feature>
<feature type="helix" evidence="4">
    <location>
        <begin position="265"/>
        <end position="267"/>
    </location>
</feature>
<feature type="strand" evidence="4">
    <location>
        <begin position="268"/>
        <end position="272"/>
    </location>
</feature>
<feature type="strand" evidence="4">
    <location>
        <begin position="276"/>
        <end position="286"/>
    </location>
</feature>
<feature type="strand" evidence="4">
    <location>
        <begin position="290"/>
        <end position="293"/>
    </location>
</feature>
<feature type="strand" evidence="4">
    <location>
        <begin position="297"/>
        <end position="303"/>
    </location>
</feature>
<feature type="strand" evidence="4">
    <location>
        <begin position="311"/>
        <end position="316"/>
    </location>
</feature>
<feature type="strand" evidence="4">
    <location>
        <begin position="323"/>
        <end position="330"/>
    </location>
</feature>
<feature type="strand" evidence="4">
    <location>
        <begin position="335"/>
        <end position="343"/>
    </location>
</feature>
<feature type="helix" evidence="4">
    <location>
        <begin position="344"/>
        <end position="348"/>
    </location>
</feature>
<feature type="strand" evidence="4">
    <location>
        <begin position="353"/>
        <end position="360"/>
    </location>
</feature>
<feature type="turn" evidence="4">
    <location>
        <begin position="364"/>
        <end position="366"/>
    </location>
</feature>
<feature type="strand" evidence="4">
    <location>
        <begin position="367"/>
        <end position="374"/>
    </location>
</feature>